<reference key="1">
    <citation type="journal article" date="2006" name="Proc. Natl. Acad. Sci. U.S.A.">
        <title>Comparative genomics of the lactic acid bacteria.</title>
        <authorList>
            <person name="Makarova K.S."/>
            <person name="Slesarev A."/>
            <person name="Wolf Y.I."/>
            <person name="Sorokin A."/>
            <person name="Mirkin B."/>
            <person name="Koonin E.V."/>
            <person name="Pavlov A."/>
            <person name="Pavlova N."/>
            <person name="Karamychev V."/>
            <person name="Polouchine N."/>
            <person name="Shakhova V."/>
            <person name="Grigoriev I."/>
            <person name="Lou Y."/>
            <person name="Rohksar D."/>
            <person name="Lucas S."/>
            <person name="Huang K."/>
            <person name="Goodstein D.M."/>
            <person name="Hawkins T."/>
            <person name="Plengvidhya V."/>
            <person name="Welker D."/>
            <person name="Hughes J."/>
            <person name="Goh Y."/>
            <person name="Benson A."/>
            <person name="Baldwin K."/>
            <person name="Lee J.-H."/>
            <person name="Diaz-Muniz I."/>
            <person name="Dosti B."/>
            <person name="Smeianov V."/>
            <person name="Wechter W."/>
            <person name="Barabote R."/>
            <person name="Lorca G."/>
            <person name="Altermann E."/>
            <person name="Barrangou R."/>
            <person name="Ganesan B."/>
            <person name="Xie Y."/>
            <person name="Rawsthorne H."/>
            <person name="Tamir D."/>
            <person name="Parker C."/>
            <person name="Breidt F."/>
            <person name="Broadbent J.R."/>
            <person name="Hutkins R."/>
            <person name="O'Sullivan D."/>
            <person name="Steele J."/>
            <person name="Unlu G."/>
            <person name="Saier M.H. Jr."/>
            <person name="Klaenhammer T."/>
            <person name="Richardson P."/>
            <person name="Kozyavkin S."/>
            <person name="Weimer B.C."/>
            <person name="Mills D.A."/>
        </authorList>
    </citation>
    <scope>NUCLEOTIDE SEQUENCE [LARGE SCALE GENOMIC DNA]</scope>
    <source>
        <strain>ATCC 334 / BCRC 17002 / CCUG 31169 / CIP 107868 / KCTC 3260 / NRRL B-441</strain>
    </source>
</reference>
<feature type="chain" id="PRO_1000053729" description="Uracil phosphoribosyltransferase">
    <location>
        <begin position="1"/>
        <end position="209"/>
    </location>
</feature>
<feature type="binding site" evidence="1">
    <location>
        <position position="79"/>
    </location>
    <ligand>
        <name>5-phospho-alpha-D-ribose 1-diphosphate</name>
        <dbReference type="ChEBI" id="CHEBI:58017"/>
    </ligand>
</feature>
<feature type="binding site" evidence="1">
    <location>
        <position position="104"/>
    </location>
    <ligand>
        <name>5-phospho-alpha-D-ribose 1-diphosphate</name>
        <dbReference type="ChEBI" id="CHEBI:58017"/>
    </ligand>
</feature>
<feature type="binding site" evidence="1">
    <location>
        <begin position="131"/>
        <end position="139"/>
    </location>
    <ligand>
        <name>5-phospho-alpha-D-ribose 1-diphosphate</name>
        <dbReference type="ChEBI" id="CHEBI:58017"/>
    </ligand>
</feature>
<feature type="binding site" evidence="1">
    <location>
        <position position="194"/>
    </location>
    <ligand>
        <name>uracil</name>
        <dbReference type="ChEBI" id="CHEBI:17568"/>
    </ligand>
</feature>
<feature type="binding site" evidence="1">
    <location>
        <begin position="199"/>
        <end position="201"/>
    </location>
    <ligand>
        <name>uracil</name>
        <dbReference type="ChEBI" id="CHEBI:17568"/>
    </ligand>
</feature>
<feature type="binding site" evidence="1">
    <location>
        <position position="200"/>
    </location>
    <ligand>
        <name>5-phospho-alpha-D-ribose 1-diphosphate</name>
        <dbReference type="ChEBI" id="CHEBI:58017"/>
    </ligand>
</feature>
<keyword id="KW-0021">Allosteric enzyme</keyword>
<keyword id="KW-0328">Glycosyltransferase</keyword>
<keyword id="KW-0342">GTP-binding</keyword>
<keyword id="KW-0460">Magnesium</keyword>
<keyword id="KW-0547">Nucleotide-binding</keyword>
<keyword id="KW-1185">Reference proteome</keyword>
<keyword id="KW-0808">Transferase</keyword>
<gene>
    <name evidence="1" type="primary">upp</name>
    <name type="ordered locus">LSEI_1159</name>
</gene>
<comment type="function">
    <text evidence="1">Catalyzes the conversion of uracil and 5-phospho-alpha-D-ribose 1-diphosphate (PRPP) to UMP and diphosphate.</text>
</comment>
<comment type="catalytic activity">
    <reaction evidence="1">
        <text>UMP + diphosphate = 5-phospho-alpha-D-ribose 1-diphosphate + uracil</text>
        <dbReference type="Rhea" id="RHEA:13017"/>
        <dbReference type="ChEBI" id="CHEBI:17568"/>
        <dbReference type="ChEBI" id="CHEBI:33019"/>
        <dbReference type="ChEBI" id="CHEBI:57865"/>
        <dbReference type="ChEBI" id="CHEBI:58017"/>
        <dbReference type="EC" id="2.4.2.9"/>
    </reaction>
</comment>
<comment type="cofactor">
    <cofactor evidence="1">
        <name>Mg(2+)</name>
        <dbReference type="ChEBI" id="CHEBI:18420"/>
    </cofactor>
    <text evidence="1">Binds 1 Mg(2+) ion per subunit. The magnesium is bound as Mg-PRPP.</text>
</comment>
<comment type="activity regulation">
    <text evidence="1">Allosterically activated by GTP.</text>
</comment>
<comment type="pathway">
    <text evidence="1">Pyrimidine metabolism; UMP biosynthesis via salvage pathway; UMP from uracil: step 1/1.</text>
</comment>
<comment type="similarity">
    <text evidence="1">Belongs to the UPRTase family.</text>
</comment>
<protein>
    <recommendedName>
        <fullName evidence="1">Uracil phosphoribosyltransferase</fullName>
        <ecNumber evidence="1">2.4.2.9</ecNumber>
    </recommendedName>
    <alternativeName>
        <fullName evidence="1">UMP pyrophosphorylase</fullName>
    </alternativeName>
    <alternativeName>
        <fullName evidence="1">UPRTase</fullName>
    </alternativeName>
</protein>
<evidence type="ECO:0000255" key="1">
    <source>
        <dbReference type="HAMAP-Rule" id="MF_01218"/>
    </source>
</evidence>
<sequence>MGKFTVLNHPLIQHKLTLIRDKHAGTKEFREIANEIAELMVYEITRDLPLESIEIETPMGKTIQKQLAGKKLAVVPILRAGLGMVDGVLRLIPAAKVGHIGMYRDEKTLKPHEYFVKMPPDIEQRDLIIVDPMLATGGSANMAIEALKKRGATSMRLVVLVAAPEGVKAVQAANPDVDIYAAALDDHLNENGYIVPGLGDAGDRLFGTK</sequence>
<dbReference type="EC" id="2.4.2.9" evidence="1"/>
<dbReference type="EMBL" id="CP000423">
    <property type="protein sequence ID" value="ABJ69947.1"/>
    <property type="molecule type" value="Genomic_DNA"/>
</dbReference>
<dbReference type="RefSeq" id="WP_003564957.1">
    <property type="nucleotide sequence ID" value="NC_008526.1"/>
</dbReference>
<dbReference type="RefSeq" id="YP_806389.1">
    <property type="nucleotide sequence ID" value="NC_008526.1"/>
</dbReference>
<dbReference type="SMR" id="Q03A25"/>
<dbReference type="STRING" id="321967.LSEI_1159"/>
<dbReference type="PaxDb" id="321967-LSEI_1159"/>
<dbReference type="GeneID" id="57089853"/>
<dbReference type="KEGG" id="lca:LSEI_1159"/>
<dbReference type="PATRIC" id="fig|321967.11.peg.1132"/>
<dbReference type="HOGENOM" id="CLU_067096_2_2_9"/>
<dbReference type="UniPathway" id="UPA00574">
    <property type="reaction ID" value="UER00636"/>
</dbReference>
<dbReference type="Proteomes" id="UP000001651">
    <property type="component" value="Chromosome"/>
</dbReference>
<dbReference type="GO" id="GO:0005525">
    <property type="term" value="F:GTP binding"/>
    <property type="evidence" value="ECO:0007669"/>
    <property type="project" value="UniProtKB-KW"/>
</dbReference>
<dbReference type="GO" id="GO:0000287">
    <property type="term" value="F:magnesium ion binding"/>
    <property type="evidence" value="ECO:0007669"/>
    <property type="project" value="UniProtKB-UniRule"/>
</dbReference>
<dbReference type="GO" id="GO:0004845">
    <property type="term" value="F:uracil phosphoribosyltransferase activity"/>
    <property type="evidence" value="ECO:0007669"/>
    <property type="project" value="UniProtKB-UniRule"/>
</dbReference>
<dbReference type="GO" id="GO:0044206">
    <property type="term" value="P:UMP salvage"/>
    <property type="evidence" value="ECO:0007669"/>
    <property type="project" value="UniProtKB-UniRule"/>
</dbReference>
<dbReference type="GO" id="GO:0006223">
    <property type="term" value="P:uracil salvage"/>
    <property type="evidence" value="ECO:0007669"/>
    <property type="project" value="InterPro"/>
</dbReference>
<dbReference type="CDD" id="cd06223">
    <property type="entry name" value="PRTases_typeI"/>
    <property type="match status" value="1"/>
</dbReference>
<dbReference type="FunFam" id="3.40.50.2020:FF:000003">
    <property type="entry name" value="Uracil phosphoribosyltransferase"/>
    <property type="match status" value="1"/>
</dbReference>
<dbReference type="Gene3D" id="3.40.50.2020">
    <property type="match status" value="1"/>
</dbReference>
<dbReference type="HAMAP" id="MF_01218_B">
    <property type="entry name" value="Upp_B"/>
    <property type="match status" value="1"/>
</dbReference>
<dbReference type="InterPro" id="IPR000836">
    <property type="entry name" value="PRibTrfase_dom"/>
</dbReference>
<dbReference type="InterPro" id="IPR029057">
    <property type="entry name" value="PRTase-like"/>
</dbReference>
<dbReference type="InterPro" id="IPR034332">
    <property type="entry name" value="Upp_B"/>
</dbReference>
<dbReference type="InterPro" id="IPR050054">
    <property type="entry name" value="UPRTase/APRTase"/>
</dbReference>
<dbReference type="InterPro" id="IPR005765">
    <property type="entry name" value="Ura_phspho_trans"/>
</dbReference>
<dbReference type="NCBIfam" id="NF001097">
    <property type="entry name" value="PRK00129.1"/>
    <property type="match status" value="1"/>
</dbReference>
<dbReference type="NCBIfam" id="TIGR01091">
    <property type="entry name" value="upp"/>
    <property type="match status" value="1"/>
</dbReference>
<dbReference type="PANTHER" id="PTHR32315">
    <property type="entry name" value="ADENINE PHOSPHORIBOSYLTRANSFERASE"/>
    <property type="match status" value="1"/>
</dbReference>
<dbReference type="PANTHER" id="PTHR32315:SF4">
    <property type="entry name" value="URACIL PHOSPHORIBOSYLTRANSFERASE, CHLOROPLASTIC"/>
    <property type="match status" value="1"/>
</dbReference>
<dbReference type="Pfam" id="PF14681">
    <property type="entry name" value="UPRTase"/>
    <property type="match status" value="1"/>
</dbReference>
<dbReference type="SUPFAM" id="SSF53271">
    <property type="entry name" value="PRTase-like"/>
    <property type="match status" value="1"/>
</dbReference>
<name>UPP_LACP3</name>
<organism>
    <name type="scientific">Lacticaseibacillus paracasei (strain ATCC 334 / BCRC 17002 / CCUG 31169 / CIP 107868 / KCTC 3260 / NRRL B-441)</name>
    <name type="common">Lactobacillus paracasei</name>
    <dbReference type="NCBI Taxonomy" id="321967"/>
    <lineage>
        <taxon>Bacteria</taxon>
        <taxon>Bacillati</taxon>
        <taxon>Bacillota</taxon>
        <taxon>Bacilli</taxon>
        <taxon>Lactobacillales</taxon>
        <taxon>Lactobacillaceae</taxon>
        <taxon>Lacticaseibacillus</taxon>
    </lineage>
</organism>
<accession>Q03A25</accession>
<proteinExistence type="inferred from homology"/>